<comment type="function">
    <text evidence="1">Promotes RNA polymerase assembly. Latches the N- and C-terminal regions of the beta' subunit thereby facilitating its interaction with the beta and alpha subunits.</text>
</comment>
<comment type="catalytic activity">
    <reaction evidence="1">
        <text>RNA(n) + a ribonucleoside 5'-triphosphate = RNA(n+1) + diphosphate</text>
        <dbReference type="Rhea" id="RHEA:21248"/>
        <dbReference type="Rhea" id="RHEA-COMP:14527"/>
        <dbReference type="Rhea" id="RHEA-COMP:17342"/>
        <dbReference type="ChEBI" id="CHEBI:33019"/>
        <dbReference type="ChEBI" id="CHEBI:61557"/>
        <dbReference type="ChEBI" id="CHEBI:140395"/>
        <dbReference type="EC" id="2.7.7.6"/>
    </reaction>
</comment>
<comment type="subunit">
    <text evidence="1">The RNAP catalytic core consists of 2 alpha, 1 beta, 1 beta' and 1 omega subunit. When a sigma factor is associated with the core the holoenzyme is formed, which can initiate transcription.</text>
</comment>
<comment type="similarity">
    <text evidence="1">Belongs to the RNA polymerase subunit omega family.</text>
</comment>
<sequence length="70" mass="7752">MLNPSIDSLLTKIDSKYTLVTVAAKRAREMQLANNCVVEKPVSHKCVGKALEEIDMEALSYVPSEDKVTE</sequence>
<dbReference type="EC" id="2.7.7.6" evidence="1"/>
<dbReference type="EMBL" id="CP000485">
    <property type="protein sequence ID" value="ABK86736.1"/>
    <property type="molecule type" value="Genomic_DNA"/>
</dbReference>
<dbReference type="RefSeq" id="WP_000933970.1">
    <property type="nucleotide sequence ID" value="NC_008600.1"/>
</dbReference>
<dbReference type="SMR" id="A0RHP3"/>
<dbReference type="GeneID" id="75087006"/>
<dbReference type="KEGG" id="btl:BALH_3501"/>
<dbReference type="HOGENOM" id="CLU_125406_6_0_9"/>
<dbReference type="GO" id="GO:0000428">
    <property type="term" value="C:DNA-directed RNA polymerase complex"/>
    <property type="evidence" value="ECO:0007669"/>
    <property type="project" value="UniProtKB-KW"/>
</dbReference>
<dbReference type="GO" id="GO:0003677">
    <property type="term" value="F:DNA binding"/>
    <property type="evidence" value="ECO:0007669"/>
    <property type="project" value="UniProtKB-UniRule"/>
</dbReference>
<dbReference type="GO" id="GO:0003899">
    <property type="term" value="F:DNA-directed RNA polymerase activity"/>
    <property type="evidence" value="ECO:0007669"/>
    <property type="project" value="UniProtKB-UniRule"/>
</dbReference>
<dbReference type="GO" id="GO:0006351">
    <property type="term" value="P:DNA-templated transcription"/>
    <property type="evidence" value="ECO:0007669"/>
    <property type="project" value="UniProtKB-UniRule"/>
</dbReference>
<dbReference type="Gene3D" id="3.90.940.10">
    <property type="match status" value="1"/>
</dbReference>
<dbReference type="HAMAP" id="MF_00366">
    <property type="entry name" value="RNApol_bact_RpoZ"/>
    <property type="match status" value="1"/>
</dbReference>
<dbReference type="InterPro" id="IPR003716">
    <property type="entry name" value="DNA-dir_RNA_pol_omega"/>
</dbReference>
<dbReference type="InterPro" id="IPR006110">
    <property type="entry name" value="Pol_omega/Rpo6/RPB6"/>
</dbReference>
<dbReference type="InterPro" id="IPR036161">
    <property type="entry name" value="RPB6/omega-like_sf"/>
</dbReference>
<dbReference type="NCBIfam" id="TIGR00690">
    <property type="entry name" value="rpoZ"/>
    <property type="match status" value="1"/>
</dbReference>
<dbReference type="PANTHER" id="PTHR34476">
    <property type="entry name" value="DNA-DIRECTED RNA POLYMERASE SUBUNIT OMEGA"/>
    <property type="match status" value="1"/>
</dbReference>
<dbReference type="PANTHER" id="PTHR34476:SF1">
    <property type="entry name" value="DNA-DIRECTED RNA POLYMERASE SUBUNIT OMEGA"/>
    <property type="match status" value="1"/>
</dbReference>
<dbReference type="Pfam" id="PF01192">
    <property type="entry name" value="RNA_pol_Rpb6"/>
    <property type="match status" value="1"/>
</dbReference>
<dbReference type="SMART" id="SM01409">
    <property type="entry name" value="RNA_pol_Rpb6"/>
    <property type="match status" value="1"/>
</dbReference>
<dbReference type="SUPFAM" id="SSF63562">
    <property type="entry name" value="RPB6/omega subunit-like"/>
    <property type="match status" value="1"/>
</dbReference>
<evidence type="ECO:0000255" key="1">
    <source>
        <dbReference type="HAMAP-Rule" id="MF_00366"/>
    </source>
</evidence>
<proteinExistence type="inferred from homology"/>
<feature type="chain" id="PRO_1000005889" description="DNA-directed RNA polymerase subunit omega">
    <location>
        <begin position="1"/>
        <end position="70"/>
    </location>
</feature>
<organism>
    <name type="scientific">Bacillus thuringiensis (strain Al Hakam)</name>
    <dbReference type="NCBI Taxonomy" id="412694"/>
    <lineage>
        <taxon>Bacteria</taxon>
        <taxon>Bacillati</taxon>
        <taxon>Bacillota</taxon>
        <taxon>Bacilli</taxon>
        <taxon>Bacillales</taxon>
        <taxon>Bacillaceae</taxon>
        <taxon>Bacillus</taxon>
        <taxon>Bacillus cereus group</taxon>
    </lineage>
</organism>
<keyword id="KW-0240">DNA-directed RNA polymerase</keyword>
<keyword id="KW-0548">Nucleotidyltransferase</keyword>
<keyword id="KW-0804">Transcription</keyword>
<keyword id="KW-0808">Transferase</keyword>
<protein>
    <recommendedName>
        <fullName evidence="1">DNA-directed RNA polymerase subunit omega</fullName>
        <shortName evidence="1">RNAP omega subunit</shortName>
        <ecNumber evidence="1">2.7.7.6</ecNumber>
    </recommendedName>
    <alternativeName>
        <fullName evidence="1">RNA polymerase omega subunit</fullName>
    </alternativeName>
    <alternativeName>
        <fullName evidence="1">Transcriptase subunit omega</fullName>
    </alternativeName>
</protein>
<reference key="1">
    <citation type="journal article" date="2007" name="J. Bacteriol.">
        <title>The complete genome sequence of Bacillus thuringiensis Al Hakam.</title>
        <authorList>
            <person name="Challacombe J.F."/>
            <person name="Altherr M.R."/>
            <person name="Xie G."/>
            <person name="Bhotika S.S."/>
            <person name="Brown N."/>
            <person name="Bruce D."/>
            <person name="Campbell C.S."/>
            <person name="Campbell M.L."/>
            <person name="Chen J."/>
            <person name="Chertkov O."/>
            <person name="Cleland C."/>
            <person name="Dimitrijevic M."/>
            <person name="Doggett N.A."/>
            <person name="Fawcett J.J."/>
            <person name="Glavina T."/>
            <person name="Goodwin L.A."/>
            <person name="Green L.D."/>
            <person name="Han C.S."/>
            <person name="Hill K.K."/>
            <person name="Hitchcock P."/>
            <person name="Jackson P.J."/>
            <person name="Keim P."/>
            <person name="Kewalramani A.R."/>
            <person name="Longmire J."/>
            <person name="Lucas S."/>
            <person name="Malfatti S."/>
            <person name="Martinez D."/>
            <person name="McMurry K."/>
            <person name="Meincke L.J."/>
            <person name="Misra M."/>
            <person name="Moseman B.L."/>
            <person name="Mundt M."/>
            <person name="Munk A.C."/>
            <person name="Okinaka R.T."/>
            <person name="Parson-Quintana B."/>
            <person name="Reilly L.P."/>
            <person name="Richardson P."/>
            <person name="Robinson D.L."/>
            <person name="Saunders E."/>
            <person name="Tapia R."/>
            <person name="Tesmer J.G."/>
            <person name="Thayer N."/>
            <person name="Thompson L.S."/>
            <person name="Tice H."/>
            <person name="Ticknor L.O."/>
            <person name="Wills P.L."/>
            <person name="Gilna P."/>
            <person name="Brettin T.S."/>
        </authorList>
    </citation>
    <scope>NUCLEOTIDE SEQUENCE [LARGE SCALE GENOMIC DNA]</scope>
    <source>
        <strain>Al Hakam</strain>
    </source>
</reference>
<accession>A0RHP3</accession>
<name>RPOZ_BACAH</name>
<gene>
    <name evidence="1" type="primary">rpoZ</name>
    <name type="ordered locus">BALH_3501</name>
</gene>